<sequence length="343" mass="37019">MLVLGVESTAHTFSLGLVLDGKILGQLGKTYLPPSGEGIHPREAADHHSKVAPVIFRQLLNAHGITASDIDVIAYAAGPGLGPALRIGAVFARALAIKLGVPLVPVHHGIAHIEVARYTTASCDPLVLLISGGHTLIAGFSEGRYRIFGETLDVAIGNAIDMFAREVGLGFPGVPAVEKCAESADRLVPFPMTIIGQDLSYAGLTTYALKLWKSGTPLPVVCKSLVEAAYYMLAEVTERALAFTKKRELVVAGGVARSKRLRGILEHVGREYGVAVKIVPDEYAGDNGAMIALTGYYAYRRGIRTTPEESFVKQRWRLDSVDIPWFYDLCEEVVLNTSTKRRP</sequence>
<proteinExistence type="inferred from homology"/>
<name>KAE1_PYRAE</name>
<organism>
    <name type="scientific">Pyrobaculum aerophilum (strain ATCC 51768 / DSM 7523 / JCM 9630 / CIP 104966 / NBRC 100827 / IM2)</name>
    <dbReference type="NCBI Taxonomy" id="178306"/>
    <lineage>
        <taxon>Archaea</taxon>
        <taxon>Thermoproteota</taxon>
        <taxon>Thermoprotei</taxon>
        <taxon>Thermoproteales</taxon>
        <taxon>Thermoproteaceae</taxon>
        <taxon>Pyrobaculum</taxon>
    </lineage>
</organism>
<protein>
    <recommendedName>
        <fullName evidence="1">tRNA N6-adenosine threonylcarbamoyltransferase</fullName>
        <ecNumber evidence="1">2.3.1.234</ecNumber>
    </recommendedName>
    <alternativeName>
        <fullName evidence="1">N6-L-threonylcarbamoyladenine synthase</fullName>
        <shortName evidence="1">t(6)A synthase</shortName>
    </alternativeName>
    <alternativeName>
        <fullName evidence="1">t(6)A37 threonylcarbamoyladenosine biosynthesis protein Kae1</fullName>
    </alternativeName>
    <alternativeName>
        <fullName evidence="1">tRNA threonylcarbamoyladenosine biosynthesis protein Kae1</fullName>
    </alternativeName>
</protein>
<reference key="1">
    <citation type="journal article" date="2002" name="Proc. Natl. Acad. Sci. U.S.A.">
        <title>Genome sequence of the hyperthermophilic crenarchaeon Pyrobaculum aerophilum.</title>
        <authorList>
            <person name="Fitz-Gibbon S.T."/>
            <person name="Ladner H."/>
            <person name="Kim U.-J."/>
            <person name="Stetter K.O."/>
            <person name="Simon M.I."/>
            <person name="Miller J.H."/>
        </authorList>
    </citation>
    <scope>NUCLEOTIDE SEQUENCE [LARGE SCALE GENOMIC DNA]</scope>
    <source>
        <strain>ATCC 51768 / DSM 7523 / JCM 9630 / CIP 104966 / NBRC 100827 / IM2</strain>
    </source>
</reference>
<accession>Q8ZV67</accession>
<keyword id="KW-0012">Acyltransferase</keyword>
<keyword id="KW-0963">Cytoplasm</keyword>
<keyword id="KW-0408">Iron</keyword>
<keyword id="KW-0479">Metal-binding</keyword>
<keyword id="KW-1185">Reference proteome</keyword>
<keyword id="KW-0808">Transferase</keyword>
<keyword id="KW-0819">tRNA processing</keyword>
<evidence type="ECO:0000255" key="1">
    <source>
        <dbReference type="HAMAP-Rule" id="MF_01446"/>
    </source>
</evidence>
<dbReference type="EC" id="2.3.1.234" evidence="1"/>
<dbReference type="EMBL" id="AE009441">
    <property type="protein sequence ID" value="AAL64189.1"/>
    <property type="molecule type" value="Genomic_DNA"/>
</dbReference>
<dbReference type="RefSeq" id="WP_011008657.1">
    <property type="nucleotide sequence ID" value="NC_003364.1"/>
</dbReference>
<dbReference type="SMR" id="Q8ZV67"/>
<dbReference type="FunCoup" id="Q8ZV67">
    <property type="interactions" value="146"/>
</dbReference>
<dbReference type="STRING" id="178306.PAE2430"/>
<dbReference type="EnsemblBacteria" id="AAL64189">
    <property type="protein sequence ID" value="AAL64189"/>
    <property type="gene ID" value="PAE2430"/>
</dbReference>
<dbReference type="GeneID" id="1464530"/>
<dbReference type="KEGG" id="pai:PAE2430"/>
<dbReference type="PATRIC" id="fig|178306.9.peg.1813"/>
<dbReference type="eggNOG" id="arCOG01183">
    <property type="taxonomic scope" value="Archaea"/>
</dbReference>
<dbReference type="HOGENOM" id="CLU_023208_2_2_2"/>
<dbReference type="InParanoid" id="Q8ZV67"/>
<dbReference type="Proteomes" id="UP000002439">
    <property type="component" value="Chromosome"/>
</dbReference>
<dbReference type="GO" id="GO:0005737">
    <property type="term" value="C:cytoplasm"/>
    <property type="evidence" value="ECO:0000318"/>
    <property type="project" value="GO_Central"/>
</dbReference>
<dbReference type="GO" id="GO:0000408">
    <property type="term" value="C:EKC/KEOPS complex"/>
    <property type="evidence" value="ECO:0000318"/>
    <property type="project" value="GO_Central"/>
</dbReference>
<dbReference type="GO" id="GO:0005506">
    <property type="term" value="F:iron ion binding"/>
    <property type="evidence" value="ECO:0007669"/>
    <property type="project" value="UniProtKB-UniRule"/>
</dbReference>
<dbReference type="GO" id="GO:0061711">
    <property type="term" value="F:N(6)-L-threonylcarbamoyladenine synthase activity"/>
    <property type="evidence" value="ECO:0007669"/>
    <property type="project" value="UniProtKB-EC"/>
</dbReference>
<dbReference type="GO" id="GO:0002949">
    <property type="term" value="P:tRNA threonylcarbamoyladenosine modification"/>
    <property type="evidence" value="ECO:0007669"/>
    <property type="project" value="UniProtKB-UniRule"/>
</dbReference>
<dbReference type="CDD" id="cd24131">
    <property type="entry name" value="ASKHA_NBD_Kae1_arch_bac"/>
    <property type="match status" value="1"/>
</dbReference>
<dbReference type="Gene3D" id="3.30.420.40">
    <property type="match status" value="2"/>
</dbReference>
<dbReference type="HAMAP" id="MF_01446">
    <property type="entry name" value="Kae1"/>
    <property type="match status" value="1"/>
</dbReference>
<dbReference type="InterPro" id="IPR043129">
    <property type="entry name" value="ATPase_NBD"/>
</dbReference>
<dbReference type="InterPro" id="IPR000905">
    <property type="entry name" value="Gcp-like_dom"/>
</dbReference>
<dbReference type="InterPro" id="IPR017861">
    <property type="entry name" value="KAE1/TsaD"/>
</dbReference>
<dbReference type="InterPro" id="IPR034680">
    <property type="entry name" value="Kae1_archaea_euk"/>
</dbReference>
<dbReference type="InterPro" id="IPR017860">
    <property type="entry name" value="Peptidase_M22_CS"/>
</dbReference>
<dbReference type="NCBIfam" id="TIGR03722">
    <property type="entry name" value="arch_KAE1"/>
    <property type="match status" value="1"/>
</dbReference>
<dbReference type="NCBIfam" id="TIGR00329">
    <property type="entry name" value="gcp_kae1"/>
    <property type="match status" value="1"/>
</dbReference>
<dbReference type="PANTHER" id="PTHR11735">
    <property type="entry name" value="TRNA N6-ADENOSINE THREONYLCARBAMOYLTRANSFERASE"/>
    <property type="match status" value="1"/>
</dbReference>
<dbReference type="PANTHER" id="PTHR11735:SF14">
    <property type="entry name" value="TRNA N6-ADENOSINE THREONYLCARBAMOYLTRANSFERASE"/>
    <property type="match status" value="1"/>
</dbReference>
<dbReference type="Pfam" id="PF00814">
    <property type="entry name" value="TsaD"/>
    <property type="match status" value="1"/>
</dbReference>
<dbReference type="PRINTS" id="PR00789">
    <property type="entry name" value="OSIALOPTASE"/>
</dbReference>
<dbReference type="SUPFAM" id="SSF53067">
    <property type="entry name" value="Actin-like ATPase domain"/>
    <property type="match status" value="1"/>
</dbReference>
<dbReference type="PROSITE" id="PS01016">
    <property type="entry name" value="GLYCOPROTEASE"/>
    <property type="match status" value="1"/>
</dbReference>
<feature type="chain" id="PRO_0000303637" description="tRNA N6-adenosine threonylcarbamoyltransferase">
    <location>
        <begin position="1"/>
        <end position="343"/>
    </location>
</feature>
<feature type="binding site" evidence="1">
    <location>
        <position position="108"/>
    </location>
    <ligand>
        <name>Fe cation</name>
        <dbReference type="ChEBI" id="CHEBI:24875"/>
    </ligand>
</feature>
<feature type="binding site" evidence="1">
    <location>
        <position position="112"/>
    </location>
    <ligand>
        <name>Fe cation</name>
        <dbReference type="ChEBI" id="CHEBI:24875"/>
    </ligand>
</feature>
<feature type="binding site" evidence="1">
    <location>
        <begin position="129"/>
        <end position="133"/>
    </location>
    <ligand>
        <name>substrate</name>
    </ligand>
</feature>
<feature type="binding site" evidence="1">
    <location>
        <position position="161"/>
    </location>
    <ligand>
        <name>substrate</name>
    </ligand>
</feature>
<feature type="binding site" evidence="1">
    <location>
        <position position="178"/>
    </location>
    <ligand>
        <name>substrate</name>
    </ligand>
</feature>
<feature type="binding site" evidence="1">
    <location>
        <position position="258"/>
    </location>
    <ligand>
        <name>substrate</name>
    </ligand>
</feature>
<feature type="binding site" evidence="1">
    <location>
        <position position="286"/>
    </location>
    <ligand>
        <name>Fe cation</name>
        <dbReference type="ChEBI" id="CHEBI:24875"/>
    </ligand>
</feature>
<gene>
    <name evidence="1" type="primary">kae1</name>
    <name type="ordered locus">PAE2430</name>
</gene>
<comment type="function">
    <text evidence="1">Required for the formation of a threonylcarbamoyl group on adenosine at position 37 (t(6)A37) in tRNAs that read codons beginning with adenine. Is probably involved in the transfer of the threonylcarbamoyl moiety of threonylcarbamoyl-AMP (TC-AMP) to the N6 group of A37.</text>
</comment>
<comment type="catalytic activity">
    <reaction evidence="1">
        <text>L-threonylcarbamoyladenylate + adenosine(37) in tRNA = N(6)-L-threonylcarbamoyladenosine(37) in tRNA + AMP + H(+)</text>
        <dbReference type="Rhea" id="RHEA:37059"/>
        <dbReference type="Rhea" id="RHEA-COMP:10162"/>
        <dbReference type="Rhea" id="RHEA-COMP:10163"/>
        <dbReference type="ChEBI" id="CHEBI:15378"/>
        <dbReference type="ChEBI" id="CHEBI:73682"/>
        <dbReference type="ChEBI" id="CHEBI:74411"/>
        <dbReference type="ChEBI" id="CHEBI:74418"/>
        <dbReference type="ChEBI" id="CHEBI:456215"/>
        <dbReference type="EC" id="2.3.1.234"/>
    </reaction>
</comment>
<comment type="cofactor">
    <cofactor evidence="1">
        <name>Fe(2+)</name>
        <dbReference type="ChEBI" id="CHEBI:29033"/>
    </cofactor>
    <text evidence="1">Binds 1 Fe(2+) ion per subunit.</text>
</comment>
<comment type="subcellular location">
    <subcellularLocation>
        <location evidence="1">Cytoplasm</location>
    </subcellularLocation>
</comment>
<comment type="similarity">
    <text evidence="1">Belongs to the KAE1 / TsaD family.</text>
</comment>